<proteinExistence type="evidence at protein level"/>
<accession>Q8IHZ5</accession>
<organism evidence="17">
    <name type="scientific">Plasmodium falciparum (isolate 3D7)</name>
    <dbReference type="NCBI Taxonomy" id="36329"/>
    <lineage>
        <taxon>Eukaryota</taxon>
        <taxon>Sar</taxon>
        <taxon>Alveolata</taxon>
        <taxon>Apicomplexa</taxon>
        <taxon>Aconoidasida</taxon>
        <taxon>Haemosporida</taxon>
        <taxon>Plasmodiidae</taxon>
        <taxon>Plasmodium</taxon>
        <taxon>Plasmodium (Laverania)</taxon>
    </lineage>
</organism>
<evidence type="ECO:0000250" key="1">
    <source>
        <dbReference type="UniProtKB" id="O97364"/>
    </source>
</evidence>
<evidence type="ECO:0000255" key="2"/>
<evidence type="ECO:0000255" key="3">
    <source>
        <dbReference type="PROSITE-ProRule" id="PRU00498"/>
    </source>
</evidence>
<evidence type="ECO:0000255" key="4">
    <source>
        <dbReference type="PROSITE-ProRule" id="PRU01240"/>
    </source>
</evidence>
<evidence type="ECO:0000256" key="5">
    <source>
        <dbReference type="SAM" id="MobiDB-lite"/>
    </source>
</evidence>
<evidence type="ECO:0000269" key="6">
    <source>
    </source>
</evidence>
<evidence type="ECO:0000269" key="7">
    <source>
    </source>
</evidence>
<evidence type="ECO:0000269" key="8">
    <source>
    </source>
</evidence>
<evidence type="ECO:0000269" key="9">
    <source>
    </source>
</evidence>
<evidence type="ECO:0000303" key="10">
    <source>
    </source>
</evidence>
<evidence type="ECO:0000303" key="11">
    <source>
    </source>
</evidence>
<evidence type="ECO:0000305" key="12"/>
<evidence type="ECO:0000305" key="13">
    <source>
    </source>
</evidence>
<evidence type="ECO:0000305" key="14">
    <source>
    </source>
</evidence>
<evidence type="ECO:0000305" key="15">
    <source>
    </source>
</evidence>
<evidence type="ECO:0000312" key="16">
    <source>
        <dbReference type="EMBL" id="CZT99035.1"/>
    </source>
</evidence>
<evidence type="ECO:0000312" key="17">
    <source>
        <dbReference type="Proteomes" id="UP000001450"/>
    </source>
</evidence>
<sequence>MLNIIYVVSLILIKFIFYKECNNNNNYYLSNIELYNYKLRKRNRILNNNINDRKSFLSDLEQNYKPLFDIYELSANFEKRRKELEKKTKGEENEIEKKKENDLEKKKENEIEKKKENDLEKEYNDVINLLELSLSSEYKELNADVSNNDNSGHEENNKHKLNKKNSSNYKNDKSLDELIKGAILKLKQNPNIKNKNMLDYDKIFKIIKEKLINKNLASNKIKGGDNEKLKEEKKQSDISTNVEVKKDIINDQLNKGIPTKKENKDDMINKESNKEDITNEGKSNSLNNLNTLNNDGNIITKVYDHYTIVTNSNDILNDISIDASDISKNSIGGINIPFNENDNSSFTHQRYIVLSNNGEKKYKIVLMTKNPKFMDMDGIYDEEEKKESLIELNQKVNKEENTNLYDGTGTLYYGKKSKKEKENTQQKGGNNPNVDINILNNNNNNNNNNNSNNNSNSMNDEEINYNNNNNNKESPSMFRRFINFLSFSGNENETEDTLIYHNKNDNSYKNKKEGTGKNNDNNDPNNNNNKKILLNVDKLVDQYLLNLKNNHTSKQELILVLKGELDLHSKNMKNVINNAKKNLEKYFKEHFKEFDKISYDISTPINFLCIFIPTLFDMNNMDLLKQALLILHNDLHEYVENWSFSSTYHTYEADYIKEQDSVYDRSPKKKYIKASKKLYNNKYSFLNKFLNIEPLILFAKKLNSKRSNIEKEILNFLPKELRDYSTWNLSIIRVFNAWFLAGYGNKNVKVCVVDSGADINHVDLNGNLYIPEYNEKYEMTQDFYNFMVKNPTDASGHGTHVTGIIGGVANDLGVVGVAPNITLISLRFIDGKKYGGSFHAIKALNVCILNKAPIINASWGSSHFDVNLHLAVERLKYTLNGKGSVLIAASGNKSNDNDISPLYPATFTFPHVYSVASISRNFEISPFSNYGHKSVHILAPGHHIYSTIPNNSYKIFTGTSMAAPHVCGVSALVYSVCYNQGFIPQAEEVLDILTRTSIKIISTKKRTINDSLVNAEGAVLTTLLGGLWMQMDCYFVKFNLEKGKKKHIPVVFSAYKKGVYETDIVIAIIPIDGKSKIYGEIHIPIKIVTDVNIPNFQESPRRGKNYTIDSNEAQHDEVLSYICENALYNLYEYDSHYLLASVILFFLALLSIFVGMIYMKSRKHSDKKCSKNLIKSNYIPEMDDGMEETQQLQQERRQYFRELFGENLEKNYDQHFVQDFGQDFRQDFKLGSTPDLKQYSDIDLQNKIQQPERKTVKIIINNFEDRKKETKRRLLKGLNYDGENAKKHDFTNESISNSRKNFKFSNNTEMKKNTIKSEDVKIASDDNVNKAMNQLDDMFMK</sequence>
<comment type="function">
    <text evidence="6 7">Serine protease which plays an essential role in the shedding of AMA1, MSP1 and MSP7 from the surface of the invading merozoite; this step is essential for productive invasion and the release of the adhesion between the erythrocyte and the merozoite (PubMed:16879884, PubMed:19214190). May cleave TRAMP/PTTRAMP, thereby shedding TRAMP from the merozoite surface during erythrocyte invasion (PubMed:16879884).</text>
</comment>
<comment type="catalytic activity">
    <reaction evidence="8 13 14">
        <text>Hydrolysis of proteins with broad specificity for peptide bonds, and a preference for a large uncharged residue in P1. Hydrolyzes peptide amides.</text>
        <dbReference type="EC" id="3.4.21.62"/>
    </reaction>
</comment>
<comment type="activity regulation">
    <text evidence="6 7">Activation may be calcium-dependent (PubMed:16879884). Inhibited by the non-covalent interaction with the cleaved propeptide (PubMed:16879884, PubMed:19214190).</text>
</comment>
<comment type="subcellular location">
    <subcellularLocation>
        <location evidence="8">Cell membrane</location>
        <topology evidence="15">Single-pass type I membrane protein</topology>
    </subcellularLocation>
    <subcellularLocation>
        <location evidence="8">Cytoplasmic vesicle</location>
        <location evidence="8">Secretory vesicle</location>
        <location evidence="8">Microneme membrane</location>
        <topology evidence="15">Single-pass type I membrane protein</topology>
    </subcellularLocation>
    <text evidence="8">In mature schizonts, localizes to micronemes at the merozoite apical region (PubMed:23834729). Immediately after schizont rupture, secreted from the micronemes to the merozoite surface where it redistributes in an actin-dependent manner to accumulate at the posterior end of newly released merozoites (PubMed:23834729).</text>
</comment>
<comment type="domain">
    <text evidence="1 6 7">The propeptide domain acts as an intramolecular chaperone for the folding of the catalytic domain (By similarity). Also acts as an inhibitor of the catalytic domain thereby regulating SUB2 activity during secretion (PubMed:16879884, PubMed:19214190).</text>
</comment>
<comment type="domain">
    <text evidence="8">The transmembrane domain is required for SUB2 progression through the secretory pathway.</text>
</comment>
<comment type="domain">
    <text evidence="8">The cytoplasmic domain is required for the correct redistribution at the merozoite surface and posterior capping but is dispensable for its progression through the secretory pathway.</text>
</comment>
<comment type="PTM">
    <text evidence="8 9">Proteolytically cleaved at the N-terminus to generate a 74kDa intermediate which is further processed into a 72kDa form (PubMed:23834729). The first maturation cleavage is autocatalytic, occurs in the ER and is necessary for the subsequent SUB2 trafficking to the microneme (PubMed:23834729). The second cleavage may be mediated by PMX/plasmepsin X (PubMed:32109369).</text>
</comment>
<comment type="similarity">
    <text evidence="4">Belongs to the peptidase S8 family.</text>
</comment>
<dbReference type="EC" id="3.4.21.62" evidence="8 13 14"/>
<dbReference type="EMBL" id="LN999945">
    <property type="protein sequence ID" value="CZT99035.1"/>
    <property type="molecule type" value="Genomic_DNA"/>
</dbReference>
<dbReference type="RefSeq" id="XP_001348051.1">
    <property type="nucleotide sequence ID" value="XM_001348015.1"/>
</dbReference>
<dbReference type="SMR" id="Q8IHZ5"/>
<dbReference type="FunCoup" id="Q8IHZ5">
    <property type="interactions" value="682"/>
</dbReference>
<dbReference type="IntAct" id="Q8IHZ5">
    <property type="interactions" value="2"/>
</dbReference>
<dbReference type="STRING" id="36329.Q8IHZ5"/>
<dbReference type="MEROPS" id="S08.013"/>
<dbReference type="GlyCosmos" id="Q8IHZ5">
    <property type="glycosylation" value="14 sites, No reported glycans"/>
</dbReference>
<dbReference type="PaxDb" id="5833-PF11_0381"/>
<dbReference type="EnsemblProtists" id="CZT99035">
    <property type="protein sequence ID" value="CZT99035"/>
    <property type="gene ID" value="PF3D7_1136900"/>
</dbReference>
<dbReference type="GeneID" id="810927"/>
<dbReference type="KEGG" id="pfa:PF3D7_1136900"/>
<dbReference type="VEuPathDB" id="PlasmoDB:PF3D7_1136900"/>
<dbReference type="HOGENOM" id="CLU_005094_0_0_1"/>
<dbReference type="InParanoid" id="Q8IHZ5"/>
<dbReference type="OMA" id="EYSTWNL"/>
<dbReference type="OrthoDB" id="371436at2759"/>
<dbReference type="PhylomeDB" id="Q8IHZ5"/>
<dbReference type="Reactome" id="R-PFA-2173796">
    <property type="pathway name" value="SMAD2/SMAD3:SMAD4 heterotrimer regulates transcription"/>
</dbReference>
<dbReference type="Proteomes" id="UP000001450">
    <property type="component" value="Chromosome 11"/>
</dbReference>
<dbReference type="GO" id="GO:0016020">
    <property type="term" value="C:membrane"/>
    <property type="evidence" value="ECO:0000318"/>
    <property type="project" value="GO_Central"/>
</dbReference>
<dbReference type="GO" id="GO:0020026">
    <property type="term" value="C:merozoite dense granule"/>
    <property type="evidence" value="ECO:0000314"/>
    <property type="project" value="GeneDB"/>
</dbReference>
<dbReference type="GO" id="GO:0020009">
    <property type="term" value="C:microneme"/>
    <property type="evidence" value="ECO:0000314"/>
    <property type="project" value="GeneDB"/>
</dbReference>
<dbReference type="GO" id="GO:0033163">
    <property type="term" value="C:microneme membrane"/>
    <property type="evidence" value="ECO:0000314"/>
    <property type="project" value="UniProtKB"/>
</dbReference>
<dbReference type="GO" id="GO:0005886">
    <property type="term" value="C:plasma membrane"/>
    <property type="evidence" value="ECO:0000314"/>
    <property type="project" value="UniProtKB"/>
</dbReference>
<dbReference type="GO" id="GO:0004252">
    <property type="term" value="F:serine-type endopeptidase activity"/>
    <property type="evidence" value="ECO:0000314"/>
    <property type="project" value="UniProtKB"/>
</dbReference>
<dbReference type="GO" id="GO:0008236">
    <property type="term" value="F:serine-type peptidase activity"/>
    <property type="evidence" value="ECO:0000314"/>
    <property type="project" value="GeneDB"/>
</dbReference>
<dbReference type="GO" id="GO:0006509">
    <property type="term" value="P:membrane protein ectodomain proteolysis"/>
    <property type="evidence" value="ECO:0000315"/>
    <property type="project" value="UniProtKB"/>
</dbReference>
<dbReference type="GO" id="GO:0051604">
    <property type="term" value="P:protein maturation"/>
    <property type="evidence" value="ECO:0000314"/>
    <property type="project" value="GeneDB"/>
</dbReference>
<dbReference type="GO" id="GO:0016485">
    <property type="term" value="P:protein processing"/>
    <property type="evidence" value="ECO:0000314"/>
    <property type="project" value="UniProtKB"/>
</dbReference>
<dbReference type="GO" id="GO:0006508">
    <property type="term" value="P:proteolysis"/>
    <property type="evidence" value="ECO:0000314"/>
    <property type="project" value="GeneDB"/>
</dbReference>
<dbReference type="FunFam" id="3.40.50.200:FF:000024">
    <property type="entry name" value="Subtilisin-like protease 2"/>
    <property type="match status" value="1"/>
</dbReference>
<dbReference type="Gene3D" id="3.30.70.2370">
    <property type="match status" value="1"/>
</dbReference>
<dbReference type="Gene3D" id="3.40.50.200">
    <property type="entry name" value="Peptidase S8/S53 domain"/>
    <property type="match status" value="1"/>
</dbReference>
<dbReference type="InterPro" id="IPR000209">
    <property type="entry name" value="Peptidase_S8/S53_dom"/>
</dbReference>
<dbReference type="InterPro" id="IPR036852">
    <property type="entry name" value="Peptidase_S8/S53_dom_sf"/>
</dbReference>
<dbReference type="InterPro" id="IPR051048">
    <property type="entry name" value="Peptidase_S8/S53_subtilisin"/>
</dbReference>
<dbReference type="InterPro" id="IPR022398">
    <property type="entry name" value="Peptidase_S8_His-AS"/>
</dbReference>
<dbReference type="InterPro" id="IPR023828">
    <property type="entry name" value="Peptidase_S8_Ser-AS"/>
</dbReference>
<dbReference type="InterPro" id="IPR015500">
    <property type="entry name" value="Peptidase_S8_subtilisin-rel"/>
</dbReference>
<dbReference type="InterPro" id="IPR040935">
    <property type="entry name" value="Pro_sub2"/>
</dbReference>
<dbReference type="PANTHER" id="PTHR43399:SF4">
    <property type="entry name" value="CELL WALL-ASSOCIATED PROTEASE"/>
    <property type="match status" value="1"/>
</dbReference>
<dbReference type="PANTHER" id="PTHR43399">
    <property type="entry name" value="SUBTILISIN-RELATED"/>
    <property type="match status" value="1"/>
</dbReference>
<dbReference type="Pfam" id="PF00082">
    <property type="entry name" value="Peptidase_S8"/>
    <property type="match status" value="1"/>
</dbReference>
<dbReference type="Pfam" id="PF18513">
    <property type="entry name" value="Pro_sub2"/>
    <property type="match status" value="1"/>
</dbReference>
<dbReference type="PRINTS" id="PR00723">
    <property type="entry name" value="SUBTILISIN"/>
</dbReference>
<dbReference type="SUPFAM" id="SSF52743">
    <property type="entry name" value="Subtilisin-like"/>
    <property type="match status" value="1"/>
</dbReference>
<dbReference type="PROSITE" id="PS00141">
    <property type="entry name" value="ASP_PROTEASE"/>
    <property type="match status" value="1"/>
</dbReference>
<dbReference type="PROSITE" id="PS51892">
    <property type="entry name" value="SUBTILASE"/>
    <property type="match status" value="1"/>
</dbReference>
<dbReference type="PROSITE" id="PS00137">
    <property type="entry name" value="SUBTILASE_HIS"/>
    <property type="match status" value="1"/>
</dbReference>
<dbReference type="PROSITE" id="PS00138">
    <property type="entry name" value="SUBTILASE_SER"/>
    <property type="match status" value="1"/>
</dbReference>
<name>SUB2_PLAF7</name>
<keyword id="KW-0068">Autocatalytic cleavage</keyword>
<keyword id="KW-1003">Cell membrane</keyword>
<keyword id="KW-0968">Cytoplasmic vesicle</keyword>
<keyword id="KW-0325">Glycoprotein</keyword>
<keyword id="KW-0378">Hydrolase</keyword>
<keyword id="KW-0472">Membrane</keyword>
<keyword id="KW-0645">Protease</keyword>
<keyword id="KW-1185">Reference proteome</keyword>
<keyword id="KW-0720">Serine protease</keyword>
<keyword id="KW-0732">Signal</keyword>
<keyword id="KW-0812">Transmembrane</keyword>
<keyword id="KW-1133">Transmembrane helix</keyword>
<keyword id="KW-0865">Zymogen</keyword>
<reference evidence="17" key="1">
    <citation type="journal article" date="2002" name="Nature">
        <title>Genome sequence of the human malaria parasite Plasmodium falciparum.</title>
        <authorList>
            <person name="Gardner M.J."/>
            <person name="Hall N."/>
            <person name="Fung E."/>
            <person name="White O."/>
            <person name="Berriman M."/>
            <person name="Hyman R.W."/>
            <person name="Carlton J.M."/>
            <person name="Pain A."/>
            <person name="Nelson K.E."/>
            <person name="Bowman S."/>
            <person name="Paulsen I.T."/>
            <person name="James K.D."/>
            <person name="Eisen J.A."/>
            <person name="Rutherford K.M."/>
            <person name="Salzberg S.L."/>
            <person name="Craig A."/>
            <person name="Kyes S."/>
            <person name="Chan M.-S."/>
            <person name="Nene V."/>
            <person name="Shallom S.J."/>
            <person name="Suh B."/>
            <person name="Peterson J."/>
            <person name="Angiuoli S."/>
            <person name="Pertea M."/>
            <person name="Allen J."/>
            <person name="Selengut J."/>
            <person name="Haft D."/>
            <person name="Mather M.W."/>
            <person name="Vaidya A.B."/>
            <person name="Martin D.M.A."/>
            <person name="Fairlamb A.H."/>
            <person name="Fraunholz M.J."/>
            <person name="Roos D.S."/>
            <person name="Ralph S.A."/>
            <person name="McFadden G.I."/>
            <person name="Cummings L.M."/>
            <person name="Subramanian G.M."/>
            <person name="Mungall C."/>
            <person name="Venter J.C."/>
            <person name="Carucci D.J."/>
            <person name="Hoffman S.L."/>
            <person name="Newbold C."/>
            <person name="Davis R.W."/>
            <person name="Fraser C.M."/>
            <person name="Barrell B.G."/>
        </authorList>
    </citation>
    <scope>NUCLEOTIDE SEQUENCE [LARGE SCALE GENOMIC DNA]</scope>
    <source>
        <strain evidence="17">3D7</strain>
    </source>
</reference>
<reference evidence="12" key="2">
    <citation type="journal article" date="2006" name="Mol. Biochem. Parasitol.">
        <title>Plasmodium thrombospondin related apical merozoite protein (PTRAMP) is shed from the surface of merozoites by PfSUB2 upon invasion of erythrocytes.</title>
        <authorList>
            <person name="Green J.L."/>
            <person name="Hinds L."/>
            <person name="Grainger M."/>
            <person name="Knuepfer E."/>
            <person name="Holder A.A."/>
        </authorList>
    </citation>
    <scope>FUNCTION</scope>
    <scope>CATALYTIC ACTIVITY</scope>
    <scope>ACTIVITY REGULATION</scope>
    <scope>DOMAIN</scope>
</reference>
<reference evidence="12" key="3">
    <citation type="journal article" date="2009" name="EMBO J.">
        <title>A multifunctional serine protease primes the malaria parasite for red blood cell invasion.</title>
        <authorList>
            <person name="Koussis K."/>
            <person name="Withers-Martinez C."/>
            <person name="Yeoh S."/>
            <person name="Child M."/>
            <person name="Hackett F."/>
            <person name="Knuepfer E."/>
            <person name="Juliano L."/>
            <person name="Woehlbier U."/>
            <person name="Bujard H."/>
            <person name="Blackman M.J."/>
        </authorList>
    </citation>
    <scope>FUNCTION</scope>
    <scope>CATALYTIC ACTIVITY</scope>
    <scope>ACTIVITY REGULATION</scope>
    <scope>DOMAIN</scope>
</reference>
<reference evidence="12" key="4">
    <citation type="journal article" date="2013" name="Traffic">
        <title>Molecular determinants for subcellular trafficking of the malarial sheddase PfSUB2.</title>
        <authorList>
            <person name="Child M.A."/>
            <person name="Harris P.K."/>
            <person name="Collins C.R."/>
            <person name="Withers-Martinez C."/>
            <person name="Yeoh S."/>
            <person name="Blackman M.J."/>
        </authorList>
    </citation>
    <scope>CATALYTIC ACTIVITY</scope>
    <scope>SUBCELLULAR LOCATION</scope>
    <scope>DOMAIN</scope>
    <scope>PROTEOLYTIC CLEAVAGE</scope>
    <scope>MUTAGENESIS OF SER-960</scope>
</reference>
<reference key="5">
    <citation type="journal article" date="2020" name="Cell Host Microbe">
        <title>Dual Plasmepsin-Targeting Antimalarial Agents Disrupt Multiple Stages of the Malaria Parasite Life Cycle.</title>
        <authorList>
            <person name="Favuzza P."/>
            <person name="de Lera Ruiz M."/>
            <person name="Thompson J.K."/>
            <person name="Triglia T."/>
            <person name="Ngo A."/>
            <person name="Steel R.W.J."/>
            <person name="Vavrek M."/>
            <person name="Christensen J."/>
            <person name="Healer J."/>
            <person name="Boyce C."/>
            <person name="Guo Z."/>
            <person name="Hu M."/>
            <person name="Khan T."/>
            <person name="Murgolo N."/>
            <person name="Zhao L."/>
            <person name="Penington J.S."/>
            <person name="Reaksudsan K."/>
            <person name="Jarman K."/>
            <person name="Dietrich M.H."/>
            <person name="Richardson L."/>
            <person name="Guo K.Y."/>
            <person name="Lopaticki S."/>
            <person name="Tham W.H."/>
            <person name="Rottmann M."/>
            <person name="Papenfuss T."/>
            <person name="Robbins J.A."/>
            <person name="Boddey J.A."/>
            <person name="Sleebs B.E."/>
            <person name="Sabroux H.J."/>
            <person name="McCauley J.A."/>
            <person name="Olsen D.B."/>
            <person name="Cowman A.F."/>
        </authorList>
    </citation>
    <scope>PROTEOLYTIC CLEAVAGE</scope>
</reference>
<feature type="signal peptide" evidence="2">
    <location>
        <begin position="1"/>
        <end position="18"/>
    </location>
</feature>
<feature type="propeptide" id="PRO_0000450752" description="Inhibition peptide" evidence="1">
    <location>
        <begin position="19"/>
        <end position="686"/>
    </location>
</feature>
<feature type="chain" id="PRO_5019506422" description="Subtilisin-like protease 2" evidence="1">
    <location>
        <begin position="687"/>
        <end position="1341"/>
    </location>
</feature>
<feature type="topological domain" description="Extracellular" evidence="12">
    <location>
        <begin position="687"/>
        <end position="1136"/>
    </location>
</feature>
<feature type="transmembrane region" description="Helical" evidence="2">
    <location>
        <begin position="1137"/>
        <end position="1157"/>
    </location>
</feature>
<feature type="topological domain" description="Cytoplasmic" evidence="12">
    <location>
        <begin position="1158"/>
        <end position="1341"/>
    </location>
</feature>
<feature type="domain" description="Peptidase S8" evidence="4">
    <location>
        <begin position="726"/>
        <end position="1019"/>
    </location>
</feature>
<feature type="region of interest" description="Disordered" evidence="5">
    <location>
        <begin position="85"/>
        <end position="107"/>
    </location>
</feature>
<feature type="region of interest" description="Disordered" evidence="5">
    <location>
        <begin position="143"/>
        <end position="171"/>
    </location>
</feature>
<feature type="region of interest" description="Disordered" evidence="5">
    <location>
        <begin position="415"/>
        <end position="474"/>
    </location>
</feature>
<feature type="region of interest" description="Disordered" evidence="5">
    <location>
        <begin position="499"/>
        <end position="530"/>
    </location>
</feature>
<feature type="compositionally biased region" description="Low complexity" evidence="5">
    <location>
        <begin position="430"/>
        <end position="474"/>
    </location>
</feature>
<feature type="compositionally biased region" description="Basic and acidic residues" evidence="5">
    <location>
        <begin position="502"/>
        <end position="515"/>
    </location>
</feature>
<feature type="compositionally biased region" description="Low complexity" evidence="5">
    <location>
        <begin position="517"/>
        <end position="530"/>
    </location>
</feature>
<feature type="active site" description="Charge relay system" evidence="4">
    <location>
        <position position="754"/>
    </location>
</feature>
<feature type="active site" description="Charge relay system" evidence="4">
    <location>
        <position position="797"/>
    </location>
</feature>
<feature type="active site" description="Charge relay system" evidence="4">
    <location>
        <position position="960"/>
    </location>
</feature>
<feature type="glycosylation site" description="N-linked (GlcNAc...) asparagine" evidence="3">
    <location>
        <position position="165"/>
    </location>
</feature>
<feature type="glycosylation site" description="N-linked (GlcNAc...) asparagine" evidence="3">
    <location>
        <position position="343"/>
    </location>
</feature>
<feature type="glycosylation site" description="N-linked (GlcNAc...) asparagine" evidence="3">
    <location>
        <position position="449"/>
    </location>
</feature>
<feature type="glycosylation site" description="N-linked (GlcNAc...) asparagine" evidence="3">
    <location>
        <position position="453"/>
    </location>
</feature>
<feature type="glycosylation site" description="N-linked (GlcNAc...) asparagine" evidence="3">
    <location>
        <position position="492"/>
    </location>
</feature>
<feature type="glycosylation site" description="N-linked (GlcNAc...) asparagine" evidence="3">
    <location>
        <position position="550"/>
    </location>
</feature>
<feature type="glycosylation site" description="N-linked (GlcNAc...) asparagine" evidence="3">
    <location>
        <position position="641"/>
    </location>
</feature>
<feature type="glycosylation site" description="N-linked (GlcNAc...) asparagine" evidence="3">
    <location>
        <position position="728"/>
    </location>
</feature>
<feature type="glycosylation site" description="N-linked (GlcNAc...) asparagine" evidence="3">
    <location>
        <position position="820"/>
    </location>
</feature>
<feature type="glycosylation site" description="N-linked (GlcNAc...) asparagine" evidence="3">
    <location>
        <position position="856"/>
    </location>
</feature>
<feature type="glycosylation site" description="N-linked (GlcNAc...) asparagine" evidence="3">
    <location>
        <position position="892"/>
    </location>
</feature>
<feature type="glycosylation site" description="N-linked (GlcNAc...) asparagine" evidence="3">
    <location>
        <position position="950"/>
    </location>
</feature>
<feature type="glycosylation site" description="N-linked (GlcNAc...) asparagine" evidence="3">
    <location>
        <position position="1009"/>
    </location>
</feature>
<feature type="glycosylation site" description="N-linked (GlcNAc...) asparagine" evidence="3">
    <location>
        <position position="1105"/>
    </location>
</feature>
<feature type="mutagenesis site" description="Loss of the first autocatalytic maturation cleavage. Impaired microneme localization and accumulation in a ER-like secretory compartment." evidence="8">
    <original>S</original>
    <variation>A</variation>
    <location>
        <position position="960"/>
    </location>
</feature>
<gene>
    <name evidence="11" type="primary">SUB2</name>
    <name evidence="16" type="ORF">PF3D7_1136900</name>
</gene>
<protein>
    <recommendedName>
        <fullName evidence="12">Subtilisin-like protease 2</fullName>
        <ecNumber evidence="8 13 14">3.4.21.62</ecNumber>
    </recommendedName>
    <alternativeName>
        <fullName evidence="1">Merozoite surface sheddase</fullName>
        <shortName evidence="1">MESH</shortName>
    </alternativeName>
    <alternativeName>
        <fullName evidence="10">PfSUB2</fullName>
    </alternativeName>
</protein>